<sequence length="101" mass="11000">MVALGHYLTLGAILFALSVIGIFLNRKNLIVLLMCIELMLLAVNLNFVAFSHYLGDMAGQVFVFFILTVAAAESAIGLAILVVLFRNRSTINVDELDTLKG</sequence>
<name>NUOK_LEPCP</name>
<evidence type="ECO:0000255" key="1">
    <source>
        <dbReference type="HAMAP-Rule" id="MF_01456"/>
    </source>
</evidence>
<dbReference type="EC" id="7.1.1.-" evidence="1"/>
<dbReference type="EMBL" id="CP001013">
    <property type="protein sequence ID" value="ACB33779.1"/>
    <property type="molecule type" value="Genomic_DNA"/>
</dbReference>
<dbReference type="SMR" id="B1XWB1"/>
<dbReference type="STRING" id="395495.Lcho_1511"/>
<dbReference type="KEGG" id="lch:Lcho_1511"/>
<dbReference type="eggNOG" id="COG0713">
    <property type="taxonomic scope" value="Bacteria"/>
</dbReference>
<dbReference type="HOGENOM" id="CLU_144724_2_0_4"/>
<dbReference type="OrthoDB" id="9801357at2"/>
<dbReference type="Proteomes" id="UP000001693">
    <property type="component" value="Chromosome"/>
</dbReference>
<dbReference type="GO" id="GO:0030964">
    <property type="term" value="C:NADH dehydrogenase complex"/>
    <property type="evidence" value="ECO:0007669"/>
    <property type="project" value="TreeGrafter"/>
</dbReference>
<dbReference type="GO" id="GO:0005886">
    <property type="term" value="C:plasma membrane"/>
    <property type="evidence" value="ECO:0007669"/>
    <property type="project" value="UniProtKB-SubCell"/>
</dbReference>
<dbReference type="GO" id="GO:0050136">
    <property type="term" value="F:NADH:ubiquinone reductase (non-electrogenic) activity"/>
    <property type="evidence" value="ECO:0007669"/>
    <property type="project" value="UniProtKB-UniRule"/>
</dbReference>
<dbReference type="GO" id="GO:0048038">
    <property type="term" value="F:quinone binding"/>
    <property type="evidence" value="ECO:0007669"/>
    <property type="project" value="UniProtKB-KW"/>
</dbReference>
<dbReference type="GO" id="GO:0042773">
    <property type="term" value="P:ATP synthesis coupled electron transport"/>
    <property type="evidence" value="ECO:0007669"/>
    <property type="project" value="InterPro"/>
</dbReference>
<dbReference type="FunFam" id="1.10.287.3510:FF:000001">
    <property type="entry name" value="NADH-quinone oxidoreductase subunit K"/>
    <property type="match status" value="1"/>
</dbReference>
<dbReference type="Gene3D" id="1.10.287.3510">
    <property type="match status" value="1"/>
</dbReference>
<dbReference type="HAMAP" id="MF_01456">
    <property type="entry name" value="NDH1_NuoK"/>
    <property type="match status" value="1"/>
</dbReference>
<dbReference type="InterPro" id="IPR001133">
    <property type="entry name" value="NADH_UbQ_OxRdtase_chain4L/K"/>
</dbReference>
<dbReference type="InterPro" id="IPR039428">
    <property type="entry name" value="NUOK/Mnh_C1-like"/>
</dbReference>
<dbReference type="NCBIfam" id="NF004320">
    <property type="entry name" value="PRK05715.1-2"/>
    <property type="match status" value="1"/>
</dbReference>
<dbReference type="NCBIfam" id="NF004321">
    <property type="entry name" value="PRK05715.1-3"/>
    <property type="match status" value="1"/>
</dbReference>
<dbReference type="NCBIfam" id="NF004323">
    <property type="entry name" value="PRK05715.1-5"/>
    <property type="match status" value="1"/>
</dbReference>
<dbReference type="PANTHER" id="PTHR11434:SF21">
    <property type="entry name" value="NADH DEHYDROGENASE SUBUNIT 4L-RELATED"/>
    <property type="match status" value="1"/>
</dbReference>
<dbReference type="PANTHER" id="PTHR11434">
    <property type="entry name" value="NADH-UBIQUINONE OXIDOREDUCTASE SUBUNIT ND4L"/>
    <property type="match status" value="1"/>
</dbReference>
<dbReference type="Pfam" id="PF00420">
    <property type="entry name" value="Oxidored_q2"/>
    <property type="match status" value="1"/>
</dbReference>
<organism>
    <name type="scientific">Leptothrix cholodnii (strain ATCC 51168 / LMG 8142 / SP-6)</name>
    <name type="common">Leptothrix discophora (strain SP-6)</name>
    <dbReference type="NCBI Taxonomy" id="395495"/>
    <lineage>
        <taxon>Bacteria</taxon>
        <taxon>Pseudomonadati</taxon>
        <taxon>Pseudomonadota</taxon>
        <taxon>Betaproteobacteria</taxon>
        <taxon>Burkholderiales</taxon>
        <taxon>Sphaerotilaceae</taxon>
        <taxon>Leptothrix</taxon>
    </lineage>
</organism>
<keyword id="KW-0997">Cell inner membrane</keyword>
<keyword id="KW-1003">Cell membrane</keyword>
<keyword id="KW-0472">Membrane</keyword>
<keyword id="KW-0520">NAD</keyword>
<keyword id="KW-0874">Quinone</keyword>
<keyword id="KW-1185">Reference proteome</keyword>
<keyword id="KW-1278">Translocase</keyword>
<keyword id="KW-0812">Transmembrane</keyword>
<keyword id="KW-1133">Transmembrane helix</keyword>
<keyword id="KW-0813">Transport</keyword>
<keyword id="KW-0830">Ubiquinone</keyword>
<gene>
    <name evidence="1" type="primary">nuoK</name>
    <name type="ordered locus">Lcho_1511</name>
</gene>
<reference key="1">
    <citation type="submission" date="2008-03" db="EMBL/GenBank/DDBJ databases">
        <title>Complete sequence of Leptothrix cholodnii SP-6.</title>
        <authorList>
            <consortium name="US DOE Joint Genome Institute"/>
            <person name="Copeland A."/>
            <person name="Lucas S."/>
            <person name="Lapidus A."/>
            <person name="Glavina del Rio T."/>
            <person name="Dalin E."/>
            <person name="Tice H."/>
            <person name="Bruce D."/>
            <person name="Goodwin L."/>
            <person name="Pitluck S."/>
            <person name="Chertkov O."/>
            <person name="Brettin T."/>
            <person name="Detter J.C."/>
            <person name="Han C."/>
            <person name="Kuske C.R."/>
            <person name="Schmutz J."/>
            <person name="Larimer F."/>
            <person name="Land M."/>
            <person name="Hauser L."/>
            <person name="Kyrpides N."/>
            <person name="Lykidis A."/>
            <person name="Emerson D."/>
            <person name="Richardson P."/>
        </authorList>
    </citation>
    <scope>NUCLEOTIDE SEQUENCE [LARGE SCALE GENOMIC DNA]</scope>
    <source>
        <strain>ATCC 51168 / LMG 8142 / SP-6</strain>
    </source>
</reference>
<comment type="function">
    <text evidence="1">NDH-1 shuttles electrons from NADH, via FMN and iron-sulfur (Fe-S) centers, to quinones in the respiratory chain. The immediate electron acceptor for the enzyme in this species is believed to be ubiquinone. Couples the redox reaction to proton translocation (for every two electrons transferred, four hydrogen ions are translocated across the cytoplasmic membrane), and thus conserves the redox energy in a proton gradient.</text>
</comment>
<comment type="catalytic activity">
    <reaction evidence="1">
        <text>a quinone + NADH + 5 H(+)(in) = a quinol + NAD(+) + 4 H(+)(out)</text>
        <dbReference type="Rhea" id="RHEA:57888"/>
        <dbReference type="ChEBI" id="CHEBI:15378"/>
        <dbReference type="ChEBI" id="CHEBI:24646"/>
        <dbReference type="ChEBI" id="CHEBI:57540"/>
        <dbReference type="ChEBI" id="CHEBI:57945"/>
        <dbReference type="ChEBI" id="CHEBI:132124"/>
    </reaction>
</comment>
<comment type="subunit">
    <text evidence="1">NDH-1 is composed of 14 different subunits. Subunits NuoA, H, J, K, L, M, N constitute the membrane sector of the complex.</text>
</comment>
<comment type="subcellular location">
    <subcellularLocation>
        <location evidence="1">Cell inner membrane</location>
        <topology evidence="1">Multi-pass membrane protein</topology>
    </subcellularLocation>
</comment>
<comment type="similarity">
    <text evidence="1">Belongs to the complex I subunit 4L family.</text>
</comment>
<proteinExistence type="inferred from homology"/>
<protein>
    <recommendedName>
        <fullName evidence="1">NADH-quinone oxidoreductase subunit K</fullName>
        <ecNumber evidence="1">7.1.1.-</ecNumber>
    </recommendedName>
    <alternativeName>
        <fullName evidence="1">NADH dehydrogenase I subunit K</fullName>
    </alternativeName>
    <alternativeName>
        <fullName evidence="1">NDH-1 subunit K</fullName>
    </alternativeName>
</protein>
<feature type="chain" id="PRO_0000390113" description="NADH-quinone oxidoreductase subunit K">
    <location>
        <begin position="1"/>
        <end position="101"/>
    </location>
</feature>
<feature type="transmembrane region" description="Helical" evidence="1">
    <location>
        <begin position="4"/>
        <end position="24"/>
    </location>
</feature>
<feature type="transmembrane region" description="Helical" evidence="1">
    <location>
        <begin position="30"/>
        <end position="50"/>
    </location>
</feature>
<feature type="transmembrane region" description="Helical" evidence="1">
    <location>
        <begin position="61"/>
        <end position="81"/>
    </location>
</feature>
<accession>B1XWB1</accession>